<proteinExistence type="evidence at protein level"/>
<protein>
    <recommendedName>
        <fullName>Sec-independent protein translocase protein TATC, chloroplastic</fullName>
    </recommendedName>
    <alternativeName>
        <fullName>Protein TWIN-ARGININE TRANSLOCATION C</fullName>
        <shortName>cpTatC</shortName>
    </alternativeName>
</protein>
<organism>
    <name type="scientific">Pisum sativum</name>
    <name type="common">Garden pea</name>
    <name type="synonym">Lathyrus oleraceus</name>
    <dbReference type="NCBI Taxonomy" id="3888"/>
    <lineage>
        <taxon>Eukaryota</taxon>
        <taxon>Viridiplantae</taxon>
        <taxon>Streptophyta</taxon>
        <taxon>Embryophyta</taxon>
        <taxon>Tracheophyta</taxon>
        <taxon>Spermatophyta</taxon>
        <taxon>Magnoliopsida</taxon>
        <taxon>eudicotyledons</taxon>
        <taxon>Gunneridae</taxon>
        <taxon>Pentapetalae</taxon>
        <taxon>rosids</taxon>
        <taxon>fabids</taxon>
        <taxon>Fabales</taxon>
        <taxon>Fabaceae</taxon>
        <taxon>Papilionoideae</taxon>
        <taxon>50 kb inversion clade</taxon>
        <taxon>NPAAA clade</taxon>
        <taxon>Hologalegina</taxon>
        <taxon>IRL clade</taxon>
        <taxon>Fabeae</taxon>
        <taxon>Pisum</taxon>
    </lineage>
</organism>
<comment type="function">
    <text evidence="3 4 7 8">Part of the twin-arginine translocation (Tat) system that transports large folded proteins containing a characteristic twin-arginine motif in their signal peptide across the thylakoid membrane. Involved in delta pH-dependent protein transport required for chloroplast development, especially thylakoid membrane formation. TATC and TATB mediate precursor recognition, whereas TATA facilitates translocation.</text>
</comment>
<comment type="subunit">
    <text evidence="4 5 6 7 8">In thylakoid membranes, TATC and TATB form a large receptor complex, containing about eight TATC-TATB pairs, which binds the precursor protein. Twin arginine signal peptide promotes pH-triggered docking of TATA oligomers to TATC-TATB receptor complex, inducing a conformational switch of TATA that results in activation of the translocase. TATA dissociates from TATC-TATB upon completion of translocation. According to PubMed:22564412, it is estimated that the translocase fully saturated with precursor proteins and TATA is an 2.2-megadalton complex that can individually transport eight precursor proteins or cooperatively transport multimeric precursors.</text>
</comment>
<comment type="subcellular location">
    <subcellularLocation>
        <location evidence="10 11 12 13">Plastid</location>
        <location evidence="10 11 12 13">Chloroplast thylakoid membrane</location>
        <topology evidence="10 11 12 13">Multi-pass membrane protein</topology>
    </subcellularLocation>
    <text>The N-terminus is located in the stroma.</text>
</comment>
<comment type="miscellaneous">
    <text evidence="13">TATC targets to thylakoids via a stromal intermediate, and then probably integrated through a thylakoid translocation pathway.</text>
</comment>
<comment type="similarity">
    <text evidence="9">Belongs to the TatC family.</text>
</comment>
<accession>Q94G17</accession>
<evidence type="ECO:0000255" key="1"/>
<evidence type="ECO:0000256" key="2">
    <source>
        <dbReference type="SAM" id="MobiDB-lite"/>
    </source>
</evidence>
<evidence type="ECO:0000269" key="3">
    <source>
    </source>
</evidence>
<evidence type="ECO:0000269" key="4">
    <source>
    </source>
</evidence>
<evidence type="ECO:0000269" key="5">
    <source>
    </source>
</evidence>
<evidence type="ECO:0000269" key="6">
    <source>
    </source>
</evidence>
<evidence type="ECO:0000269" key="7">
    <source>
    </source>
</evidence>
<evidence type="ECO:0000269" key="8">
    <source>
    </source>
</evidence>
<evidence type="ECO:0000305" key="9"/>
<evidence type="ECO:0000305" key="10">
    <source>
    </source>
</evidence>
<evidence type="ECO:0000305" key="11">
    <source>
    </source>
</evidence>
<evidence type="ECO:0000305" key="12">
    <source>
    </source>
</evidence>
<evidence type="ECO:0000305" key="13">
    <source>
    </source>
</evidence>
<reference key="1">
    <citation type="journal article" date="2001" name="FEBS Lett.">
        <title>Chloroplast TatC plays a direct role in thylakoid (Delta)pH-dependent protein transport.</title>
        <authorList>
            <person name="Mori H."/>
            <person name="Summer E.J."/>
            <person name="Cline K."/>
        </authorList>
    </citation>
    <scope>NUCLEOTIDE SEQUENCE [MRNA]</scope>
    <scope>FUNCTION</scope>
    <scope>SUBCELLULAR LOCATION</scope>
    <scope>TOPOLOGY</scope>
</reference>
<reference key="2">
    <citation type="journal article" date="2001" name="J. Cell Biol.">
        <title>Thylakoid DeltapH-dependent precursor proteins bind to a cpTatC-Hcf106 complex before Tha4-dependent transport.</title>
        <authorList>
            <person name="Cline K."/>
            <person name="Mori H."/>
        </authorList>
    </citation>
    <scope>FUNCTION</scope>
    <scope>SUBUNIT</scope>
</reference>
<reference key="3">
    <citation type="journal article" date="2002" name="J. Cell Biol.">
        <title>A twin arginine signal peptide and the pH gradient trigger reversible assembly of the thylakoid [Delta]pH/Tat translocase.</title>
        <authorList>
            <person name="Mori H."/>
            <person name="Cline K."/>
        </authorList>
    </citation>
    <scope>SUBUNIT</scope>
</reference>
<reference key="4">
    <citation type="journal article" date="2003" name="Eur. J. Biochem.">
        <title>Functional assembly of thylakoid deltapH-dependent/Tat protein transport pathway components in vitro.</title>
        <authorList>
            <person name="Fincher V."/>
            <person name="Dabney-Smith C."/>
            <person name="Cline K."/>
        </authorList>
    </citation>
    <scope>SUBUNIT</scope>
    <scope>SUBCELLULAR LOCATION</scope>
</reference>
<reference key="5">
    <citation type="journal article" date="2009" name="Plant J.">
        <title>Localization and integration of thylakoid protein translocase subunit cpTatC.</title>
        <authorList>
            <person name="Martin J.R."/>
            <person name="Harwood J.H."/>
            <person name="McCaffery M."/>
            <person name="Fernandez D.E."/>
            <person name="Cline K."/>
        </authorList>
    </citation>
    <scope>FUNCTION</scope>
    <scope>SUBCELLULAR LOCATION</scope>
    <scope>SUBUNIT</scope>
</reference>
<reference key="6">
    <citation type="journal article" date="2012" name="J. Biol. Chem.">
        <title>The chloroplast twin arginine transport (Tat) component, Tha4, undergoes conformational changes leading to Tat protein transport.</title>
        <authorList>
            <person name="Aldridge C."/>
            <person name="Storm A."/>
            <person name="Cline K."/>
            <person name="Dabney-Smith C."/>
        </authorList>
    </citation>
    <scope>TOPOLOGY</scope>
</reference>
<reference key="7">
    <citation type="journal article" date="2012" name="J. Cell Biol.">
        <title>Stoichiometry for binding and transport by the twin arginine translocation system.</title>
        <authorList>
            <person name="Celedon J.M."/>
            <person name="Cline K."/>
        </authorList>
    </citation>
    <scope>FUNCTION</scope>
    <scope>SUBCELLULAR LOCATION</scope>
    <scope>SUBUNIT</scope>
</reference>
<dbReference type="EMBL" id="AF284759">
    <property type="protein sequence ID" value="AAK93948.1"/>
    <property type="molecule type" value="mRNA"/>
</dbReference>
<dbReference type="SMR" id="Q94G17"/>
<dbReference type="EnsemblPlants" id="Psat6g222720.2">
    <property type="protein sequence ID" value="Psat6g222720.2.cds"/>
    <property type="gene ID" value="Psat6g222720"/>
</dbReference>
<dbReference type="Gramene" id="Psat6g222720.2">
    <property type="protein sequence ID" value="Psat6g222720.2.cds"/>
    <property type="gene ID" value="Psat6g222720"/>
</dbReference>
<dbReference type="OrthoDB" id="36838at2759"/>
<dbReference type="GO" id="GO:0009535">
    <property type="term" value="C:chloroplast thylakoid membrane"/>
    <property type="evidence" value="ECO:0000314"/>
    <property type="project" value="UniProtKB"/>
</dbReference>
<dbReference type="GO" id="GO:0033281">
    <property type="term" value="C:TAT protein transport complex"/>
    <property type="evidence" value="ECO:0000314"/>
    <property type="project" value="UniProtKB"/>
</dbReference>
<dbReference type="GO" id="GO:0009977">
    <property type="term" value="F:proton motive force dependent protein transmembrane transporter activity"/>
    <property type="evidence" value="ECO:0007669"/>
    <property type="project" value="TreeGrafter"/>
</dbReference>
<dbReference type="GO" id="GO:0065002">
    <property type="term" value="P:intracellular protein transmembrane transport"/>
    <property type="evidence" value="ECO:0007669"/>
    <property type="project" value="TreeGrafter"/>
</dbReference>
<dbReference type="GO" id="GO:0045038">
    <property type="term" value="P:protein import into chloroplast thylakoid membrane"/>
    <property type="evidence" value="ECO:0000314"/>
    <property type="project" value="UniProtKB"/>
</dbReference>
<dbReference type="GO" id="GO:0043953">
    <property type="term" value="P:protein transport by the Tat complex"/>
    <property type="evidence" value="ECO:0000314"/>
    <property type="project" value="UniProtKB"/>
</dbReference>
<dbReference type="HAMAP" id="MF_00902">
    <property type="entry name" value="TatC"/>
    <property type="match status" value="1"/>
</dbReference>
<dbReference type="InterPro" id="IPR019820">
    <property type="entry name" value="Sec-indep_translocase_CS"/>
</dbReference>
<dbReference type="InterPro" id="IPR002033">
    <property type="entry name" value="TatC"/>
</dbReference>
<dbReference type="NCBIfam" id="TIGR00945">
    <property type="entry name" value="tatC"/>
    <property type="match status" value="1"/>
</dbReference>
<dbReference type="PANTHER" id="PTHR30371">
    <property type="entry name" value="SEC-INDEPENDENT PROTEIN TRANSLOCASE PROTEIN TATC"/>
    <property type="match status" value="1"/>
</dbReference>
<dbReference type="PANTHER" id="PTHR30371:SF0">
    <property type="entry name" value="SEC-INDEPENDENT PROTEIN TRANSLOCASE PROTEIN TATC, CHLOROPLASTIC-RELATED"/>
    <property type="match status" value="1"/>
</dbReference>
<dbReference type="Pfam" id="PF00902">
    <property type="entry name" value="TatC"/>
    <property type="match status" value="1"/>
</dbReference>
<dbReference type="PRINTS" id="PR01840">
    <property type="entry name" value="TATCFAMILY"/>
</dbReference>
<dbReference type="PROSITE" id="PS01218">
    <property type="entry name" value="TATC"/>
    <property type="match status" value="1"/>
</dbReference>
<name>TATC_PEA</name>
<gene>
    <name type="primary">TATC</name>
</gene>
<sequence length="353" mass="38912">MGLGTTTVPTNILPQFGLHRTHLNPIRVNNSTGFSYPLSLRKNKSFDRLVCFAVDDEIREKQQQQLSTSSTRLGSAVEERPENKDMIDGISEEALENFKEDGERSAIYDFLYPSKELLPDDKEMSIFDHLEELRERIFISVLGVGGSILGCFAFSKDLVKILEAPVKSEGVRFLQLAPGEFFFTTLKVSGYCGLLLGSPIILYEIIAFIIPGLTKEERKFLGPIVLGSSVLFYAGITFSYLVLVPAALNFFVNYAEGAVESLWSIDQYFEFVLVLMFSTGLSFQVPIIQLLLGQLGLVSGDKMLSVWRYVVVGAVVAAAVVTPSTDPLTQVLLAAPLLGLYLGGAWMVKLAGR</sequence>
<feature type="transit peptide" description="Chloroplast" evidence="1">
    <location>
        <begin position="1"/>
        <end position="50"/>
    </location>
</feature>
<feature type="transit peptide" description="Thylakoid" evidence="1">
    <location>
        <begin position="51"/>
        <end status="unknown"/>
    </location>
</feature>
<feature type="chain" id="PRO_0000419911" description="Sec-independent protein translocase protein TATC, chloroplastic">
    <location>
        <begin status="unknown"/>
        <end position="353"/>
    </location>
</feature>
<feature type="topological domain" description="Stromal" evidence="1">
    <location>
        <begin position="51"/>
        <end position="136"/>
    </location>
</feature>
<feature type="transmembrane region" description="Helical" evidence="1">
    <location>
        <begin position="137"/>
        <end position="157"/>
    </location>
</feature>
<feature type="topological domain" description="Lumenal" evidence="1">
    <location>
        <begin position="158"/>
        <end position="192"/>
    </location>
</feature>
<feature type="transmembrane region" description="Helical" evidence="1">
    <location>
        <begin position="193"/>
        <end position="213"/>
    </location>
</feature>
<feature type="topological domain" description="Stromal" evidence="1">
    <location>
        <begin position="214"/>
        <end position="223"/>
    </location>
</feature>
<feature type="transmembrane region" description="Helical" evidence="1">
    <location>
        <begin position="224"/>
        <end position="244"/>
    </location>
</feature>
<feature type="topological domain" description="Lumenal" evidence="1">
    <location>
        <begin position="245"/>
        <end position="270"/>
    </location>
</feature>
<feature type="transmembrane region" description="Helical" evidence="1">
    <location>
        <begin position="271"/>
        <end position="291"/>
    </location>
</feature>
<feature type="topological domain" description="Stromal" evidence="1">
    <location>
        <begin position="292"/>
        <end position="302"/>
    </location>
</feature>
<feature type="transmembrane region" description="Helical" evidence="1">
    <location>
        <begin position="303"/>
        <end position="323"/>
    </location>
</feature>
<feature type="topological domain" description="Lumenal" evidence="1">
    <location>
        <begin position="324"/>
        <end position="330"/>
    </location>
</feature>
<feature type="transmembrane region" description="Helical" evidence="1">
    <location>
        <begin position="331"/>
        <end position="351"/>
    </location>
</feature>
<feature type="topological domain" description="Stromal" evidence="1">
    <location>
        <begin position="352"/>
        <end position="353"/>
    </location>
</feature>
<feature type="region of interest" description="Disordered" evidence="2">
    <location>
        <begin position="63"/>
        <end position="86"/>
    </location>
</feature>
<feature type="compositionally biased region" description="Low complexity" evidence="2">
    <location>
        <begin position="63"/>
        <end position="75"/>
    </location>
</feature>
<feature type="compositionally biased region" description="Basic and acidic residues" evidence="2">
    <location>
        <begin position="77"/>
        <end position="86"/>
    </location>
</feature>
<keyword id="KW-0150">Chloroplast</keyword>
<keyword id="KW-0472">Membrane</keyword>
<keyword id="KW-0934">Plastid</keyword>
<keyword id="KW-0653">Protein transport</keyword>
<keyword id="KW-0793">Thylakoid</keyword>
<keyword id="KW-0809">Transit peptide</keyword>
<keyword id="KW-0811">Translocation</keyword>
<keyword id="KW-0812">Transmembrane</keyword>
<keyword id="KW-1133">Transmembrane helix</keyword>
<keyword id="KW-0813">Transport</keyword>